<name>VIAA_YERPE</name>
<comment type="function">
    <text evidence="1">Component of the RavA-ViaA chaperone complex, which may act on the membrane to optimize the function of some of the respiratory chains. ViaA stimulates the ATPase activity of RavA.</text>
</comment>
<comment type="subunit">
    <text evidence="1">Homodimer. Interacts with RavA.</text>
</comment>
<comment type="subcellular location">
    <subcellularLocation>
        <location evidence="1">Cytoplasm</location>
    </subcellularLocation>
</comment>
<comment type="similarity">
    <text evidence="1">Belongs to the ViaA family.</text>
</comment>
<accession>Q8ZJT2</accession>
<accession>Q0WKT8</accession>
<accession>Q74YE0</accession>
<accession>Q7CLE8</accession>
<gene>
    <name evidence="1" type="primary">viaA</name>
    <name type="ordered locus">YPO0004</name>
    <name type="ordered locus">y0004</name>
    <name type="ordered locus">YP_0004</name>
</gene>
<organism>
    <name type="scientific">Yersinia pestis</name>
    <dbReference type="NCBI Taxonomy" id="632"/>
    <lineage>
        <taxon>Bacteria</taxon>
        <taxon>Pseudomonadati</taxon>
        <taxon>Pseudomonadota</taxon>
        <taxon>Gammaproteobacteria</taxon>
        <taxon>Enterobacterales</taxon>
        <taxon>Yersiniaceae</taxon>
        <taxon>Yersinia</taxon>
    </lineage>
</organism>
<dbReference type="EMBL" id="AL590842">
    <property type="protein sequence ID" value="CAL18694.1"/>
    <property type="molecule type" value="Genomic_DNA"/>
</dbReference>
<dbReference type="EMBL" id="AE009952">
    <property type="protein sequence ID" value="AAM83600.1"/>
    <property type="molecule type" value="Genomic_DNA"/>
</dbReference>
<dbReference type="EMBL" id="AE017042">
    <property type="protein sequence ID" value="AAS60285.1"/>
    <property type="molecule type" value="Genomic_DNA"/>
</dbReference>
<dbReference type="PIR" id="AE0001">
    <property type="entry name" value="AE0001"/>
</dbReference>
<dbReference type="RefSeq" id="WP_002212255.1">
    <property type="nucleotide sequence ID" value="NZ_WUCM01000028.1"/>
</dbReference>
<dbReference type="RefSeq" id="YP_002345100.1">
    <property type="nucleotide sequence ID" value="NC_003143.1"/>
</dbReference>
<dbReference type="SMR" id="Q8ZJT2"/>
<dbReference type="STRING" id="214092.YPO0004"/>
<dbReference type="PaxDb" id="214092-YPO0004"/>
<dbReference type="DNASU" id="1144951"/>
<dbReference type="EnsemblBacteria" id="AAS60285">
    <property type="protein sequence ID" value="AAS60285"/>
    <property type="gene ID" value="YP_0004"/>
</dbReference>
<dbReference type="GeneID" id="57974590"/>
<dbReference type="KEGG" id="ype:YPO0004"/>
<dbReference type="KEGG" id="ypk:y0004"/>
<dbReference type="KEGG" id="ypm:YP_0004"/>
<dbReference type="PATRIC" id="fig|214092.21.peg.222"/>
<dbReference type="eggNOG" id="COG2425">
    <property type="taxonomic scope" value="Bacteria"/>
</dbReference>
<dbReference type="HOGENOM" id="CLU_022130_0_0_6"/>
<dbReference type="OMA" id="CDQWYQS"/>
<dbReference type="OrthoDB" id="387240at2"/>
<dbReference type="Proteomes" id="UP000000815">
    <property type="component" value="Chromosome"/>
</dbReference>
<dbReference type="Proteomes" id="UP000001019">
    <property type="component" value="Chromosome"/>
</dbReference>
<dbReference type="Proteomes" id="UP000002490">
    <property type="component" value="Chromosome"/>
</dbReference>
<dbReference type="GO" id="GO:0005829">
    <property type="term" value="C:cytosol"/>
    <property type="evidence" value="ECO:0000318"/>
    <property type="project" value="GO_Central"/>
</dbReference>
<dbReference type="CDD" id="cd01462">
    <property type="entry name" value="VWA_YIEM_type"/>
    <property type="match status" value="1"/>
</dbReference>
<dbReference type="Gene3D" id="3.40.50.410">
    <property type="entry name" value="von Willebrand factor, type A domain"/>
    <property type="match status" value="1"/>
</dbReference>
<dbReference type="HAMAP" id="MF_01626">
    <property type="entry name" value="ViaA"/>
    <property type="match status" value="1"/>
</dbReference>
<dbReference type="InterPro" id="IPR008912">
    <property type="entry name" value="Uncharacterised_CoxE"/>
</dbReference>
<dbReference type="InterPro" id="IPR023481">
    <property type="entry name" value="Uncharacterised_ViaA"/>
</dbReference>
<dbReference type="InterPro" id="IPR002035">
    <property type="entry name" value="VWF_A"/>
</dbReference>
<dbReference type="InterPro" id="IPR036465">
    <property type="entry name" value="vWFA_dom_sf"/>
</dbReference>
<dbReference type="NCBIfam" id="NF008230">
    <property type="entry name" value="PRK10997.1"/>
    <property type="match status" value="1"/>
</dbReference>
<dbReference type="PANTHER" id="PTHR36846">
    <property type="entry name" value="PROTEIN VIAA"/>
    <property type="match status" value="1"/>
</dbReference>
<dbReference type="PANTHER" id="PTHR36846:SF1">
    <property type="entry name" value="PROTEIN VIAA"/>
    <property type="match status" value="1"/>
</dbReference>
<dbReference type="Pfam" id="PF05762">
    <property type="entry name" value="VWA_CoxE"/>
    <property type="match status" value="1"/>
</dbReference>
<dbReference type="SMART" id="SM00327">
    <property type="entry name" value="VWA"/>
    <property type="match status" value="1"/>
</dbReference>
<dbReference type="SUPFAM" id="SSF53300">
    <property type="entry name" value="vWA-like"/>
    <property type="match status" value="1"/>
</dbReference>
<sequence>MLSLATLDMLLSISEGELIEEMVVGLLAAPQLAIFFEKFPRIKRALMKDIPGWKQNLQQRIREASVPPGLANEFSLYQQSLLEDSPQFYAHLPDIVAQLQDLHSPFATQAKTLVQTADLAKNPPGGDSLQTLFLQRWRVSLILQTITIHHQLLEQEREQLLAELQRRLALSGALEPILTTNDNAAGRLWDMSQGHLQRGDYQLLLQYGDFLQQQPELIRLAEQLGRSRSAKAQPAPDARYEPYTVMVRQPDSVPEEVSGIHQSNDILRLLPTELVMLGMSELEFEFYRRLLERRLLTYRLQGDNWQEKTQQRPVSLKQNDEQPRGPFIVCVDTSGSMGGFNEQCAKAFCLALLRIALADNRRCYIMLFATEIIHYELSADNGIEQAIRFLNQHFRGGTDLAACLANTLNKMEDREWYDADAVIISDFIAQRLPEELVRKIKIQQQAHQHRFHAVAMSAYGKPGIMRIFDHIWRFDTSLKSRLIRRWKR</sequence>
<protein>
    <recommendedName>
        <fullName evidence="1">Regulatory protein ViaA</fullName>
    </recommendedName>
    <alternativeName>
        <fullName evidence="1">VWA interacting with AAA+ ATPase</fullName>
    </alternativeName>
</protein>
<proteinExistence type="inferred from homology"/>
<reference key="1">
    <citation type="journal article" date="2001" name="Nature">
        <title>Genome sequence of Yersinia pestis, the causative agent of plague.</title>
        <authorList>
            <person name="Parkhill J."/>
            <person name="Wren B.W."/>
            <person name="Thomson N.R."/>
            <person name="Titball R.W."/>
            <person name="Holden M.T.G."/>
            <person name="Prentice M.B."/>
            <person name="Sebaihia M."/>
            <person name="James K.D."/>
            <person name="Churcher C.M."/>
            <person name="Mungall K.L."/>
            <person name="Baker S."/>
            <person name="Basham D."/>
            <person name="Bentley S.D."/>
            <person name="Brooks K."/>
            <person name="Cerdeno-Tarraga A.-M."/>
            <person name="Chillingworth T."/>
            <person name="Cronin A."/>
            <person name="Davies R.M."/>
            <person name="Davis P."/>
            <person name="Dougan G."/>
            <person name="Feltwell T."/>
            <person name="Hamlin N."/>
            <person name="Holroyd S."/>
            <person name="Jagels K."/>
            <person name="Karlyshev A.V."/>
            <person name="Leather S."/>
            <person name="Moule S."/>
            <person name="Oyston P.C.F."/>
            <person name="Quail M.A."/>
            <person name="Rutherford K.M."/>
            <person name="Simmonds M."/>
            <person name="Skelton J."/>
            <person name="Stevens K."/>
            <person name="Whitehead S."/>
            <person name="Barrell B.G."/>
        </authorList>
    </citation>
    <scope>NUCLEOTIDE SEQUENCE [LARGE SCALE GENOMIC DNA]</scope>
    <source>
        <strain>CO-92 / Biovar Orientalis</strain>
    </source>
</reference>
<reference key="2">
    <citation type="journal article" date="2002" name="J. Bacteriol.">
        <title>Genome sequence of Yersinia pestis KIM.</title>
        <authorList>
            <person name="Deng W."/>
            <person name="Burland V."/>
            <person name="Plunkett G. III"/>
            <person name="Boutin A."/>
            <person name="Mayhew G.F."/>
            <person name="Liss P."/>
            <person name="Perna N.T."/>
            <person name="Rose D.J."/>
            <person name="Mau B."/>
            <person name="Zhou S."/>
            <person name="Schwartz D.C."/>
            <person name="Fetherston J.D."/>
            <person name="Lindler L.E."/>
            <person name="Brubaker R.R."/>
            <person name="Plano G.V."/>
            <person name="Straley S.C."/>
            <person name="McDonough K.A."/>
            <person name="Nilles M.L."/>
            <person name="Matson J.S."/>
            <person name="Blattner F.R."/>
            <person name="Perry R.D."/>
        </authorList>
    </citation>
    <scope>NUCLEOTIDE SEQUENCE [LARGE SCALE GENOMIC DNA]</scope>
    <source>
        <strain>KIM10+ / Biovar Mediaevalis</strain>
    </source>
</reference>
<reference key="3">
    <citation type="journal article" date="2004" name="DNA Res.">
        <title>Complete genome sequence of Yersinia pestis strain 91001, an isolate avirulent to humans.</title>
        <authorList>
            <person name="Song Y."/>
            <person name="Tong Z."/>
            <person name="Wang J."/>
            <person name="Wang L."/>
            <person name="Guo Z."/>
            <person name="Han Y."/>
            <person name="Zhang J."/>
            <person name="Pei D."/>
            <person name="Zhou D."/>
            <person name="Qin H."/>
            <person name="Pang X."/>
            <person name="Han Y."/>
            <person name="Zhai J."/>
            <person name="Li M."/>
            <person name="Cui B."/>
            <person name="Qi Z."/>
            <person name="Jin L."/>
            <person name="Dai R."/>
            <person name="Chen F."/>
            <person name="Li S."/>
            <person name="Ye C."/>
            <person name="Du Z."/>
            <person name="Lin W."/>
            <person name="Wang J."/>
            <person name="Yu J."/>
            <person name="Yang H."/>
            <person name="Wang J."/>
            <person name="Huang P."/>
            <person name="Yang R."/>
        </authorList>
    </citation>
    <scope>NUCLEOTIDE SEQUENCE [LARGE SCALE GENOMIC DNA]</scope>
    <source>
        <strain>91001 / Biovar Mediaevalis</strain>
    </source>
</reference>
<feature type="chain" id="PRO_0000196594" description="Regulatory protein ViaA">
    <location>
        <begin position="1"/>
        <end position="488"/>
    </location>
</feature>
<evidence type="ECO:0000255" key="1">
    <source>
        <dbReference type="HAMAP-Rule" id="MF_01626"/>
    </source>
</evidence>
<keyword id="KW-0143">Chaperone</keyword>
<keyword id="KW-0963">Cytoplasm</keyword>
<keyword id="KW-1185">Reference proteome</keyword>